<keyword id="KW-0963">Cytoplasm</keyword>
<keyword id="KW-0255">Endonuclease</keyword>
<keyword id="KW-0378">Hydrolase</keyword>
<keyword id="KW-0464">Manganese</keyword>
<keyword id="KW-0479">Metal-binding</keyword>
<keyword id="KW-0540">Nuclease</keyword>
<name>RNH2_YERP3</name>
<feature type="chain" id="PRO_1000057382" description="Ribonuclease HII">
    <location>
        <begin position="1"/>
        <end position="198"/>
    </location>
</feature>
<feature type="domain" description="RNase H type-2" evidence="2">
    <location>
        <begin position="11"/>
        <end position="198"/>
    </location>
</feature>
<feature type="binding site" evidence="1">
    <location>
        <position position="17"/>
    </location>
    <ligand>
        <name>a divalent metal cation</name>
        <dbReference type="ChEBI" id="CHEBI:60240"/>
    </ligand>
</feature>
<feature type="binding site" evidence="1">
    <location>
        <position position="18"/>
    </location>
    <ligand>
        <name>a divalent metal cation</name>
        <dbReference type="ChEBI" id="CHEBI:60240"/>
    </ligand>
</feature>
<feature type="binding site" evidence="1">
    <location>
        <position position="109"/>
    </location>
    <ligand>
        <name>a divalent metal cation</name>
        <dbReference type="ChEBI" id="CHEBI:60240"/>
    </ligand>
</feature>
<sequence length="198" mass="21648">MSETFIYPQANLIAGVDEVGRGPLVGAVVTAAVILDPNRPIVGLADSKKLSEKRRLSLYDEITEKALSWSLGRAEPEEIDQLNILHATMLAMQRAVSGLHIVPDYVLIDGNRCPKLQMPSLAVVKGDSRVAEISAASILAKVTRDREMTELDLLFPEYGFAQHKGYPTAFHLEKLAALGATVHHRRSFGPVKRVLGLV</sequence>
<protein>
    <recommendedName>
        <fullName evidence="1">Ribonuclease HII</fullName>
        <shortName evidence="1">RNase HII</shortName>
        <ecNumber evidence="1">3.1.26.4</ecNumber>
    </recommendedName>
</protein>
<organism>
    <name type="scientific">Yersinia pseudotuberculosis serotype O:1b (strain IP 31758)</name>
    <dbReference type="NCBI Taxonomy" id="349747"/>
    <lineage>
        <taxon>Bacteria</taxon>
        <taxon>Pseudomonadati</taxon>
        <taxon>Pseudomonadota</taxon>
        <taxon>Gammaproteobacteria</taxon>
        <taxon>Enterobacterales</taxon>
        <taxon>Yersiniaceae</taxon>
        <taxon>Yersinia</taxon>
    </lineage>
</organism>
<accession>A7FFI3</accession>
<reference key="1">
    <citation type="journal article" date="2007" name="PLoS Genet.">
        <title>The complete genome sequence of Yersinia pseudotuberculosis IP31758, the causative agent of Far East scarlet-like fever.</title>
        <authorList>
            <person name="Eppinger M."/>
            <person name="Rosovitz M.J."/>
            <person name="Fricke W.F."/>
            <person name="Rasko D.A."/>
            <person name="Kokorina G."/>
            <person name="Fayolle C."/>
            <person name="Lindler L.E."/>
            <person name="Carniel E."/>
            <person name="Ravel J."/>
        </authorList>
    </citation>
    <scope>NUCLEOTIDE SEQUENCE [LARGE SCALE GENOMIC DNA]</scope>
    <source>
        <strain>IP 31758</strain>
    </source>
</reference>
<comment type="function">
    <text evidence="1">Endonuclease that specifically degrades the RNA of RNA-DNA hybrids.</text>
</comment>
<comment type="catalytic activity">
    <reaction evidence="1">
        <text>Endonucleolytic cleavage to 5'-phosphomonoester.</text>
        <dbReference type="EC" id="3.1.26.4"/>
    </reaction>
</comment>
<comment type="cofactor">
    <cofactor evidence="1">
        <name>Mn(2+)</name>
        <dbReference type="ChEBI" id="CHEBI:29035"/>
    </cofactor>
    <cofactor evidence="1">
        <name>Mg(2+)</name>
        <dbReference type="ChEBI" id="CHEBI:18420"/>
    </cofactor>
    <text evidence="1">Manganese or magnesium. Binds 1 divalent metal ion per monomer in the absence of substrate. May bind a second metal ion after substrate binding.</text>
</comment>
<comment type="subcellular location">
    <subcellularLocation>
        <location evidence="1">Cytoplasm</location>
    </subcellularLocation>
</comment>
<comment type="similarity">
    <text evidence="1">Belongs to the RNase HII family.</text>
</comment>
<gene>
    <name evidence="1" type="primary">rnhB</name>
    <name type="ordered locus">YpsIP31758_1027</name>
</gene>
<dbReference type="EC" id="3.1.26.4" evidence="1"/>
<dbReference type="EMBL" id="CP000720">
    <property type="protein sequence ID" value="ABS45802.1"/>
    <property type="molecule type" value="Genomic_DNA"/>
</dbReference>
<dbReference type="RefSeq" id="WP_002212145.1">
    <property type="nucleotide sequence ID" value="NC_009708.1"/>
</dbReference>
<dbReference type="SMR" id="A7FFI3"/>
<dbReference type="GeneID" id="57977503"/>
<dbReference type="KEGG" id="ypi:YpsIP31758_1027"/>
<dbReference type="HOGENOM" id="CLU_036532_3_2_6"/>
<dbReference type="Proteomes" id="UP000002412">
    <property type="component" value="Chromosome"/>
</dbReference>
<dbReference type="GO" id="GO:0005737">
    <property type="term" value="C:cytoplasm"/>
    <property type="evidence" value="ECO:0007669"/>
    <property type="project" value="UniProtKB-SubCell"/>
</dbReference>
<dbReference type="GO" id="GO:0032299">
    <property type="term" value="C:ribonuclease H2 complex"/>
    <property type="evidence" value="ECO:0007669"/>
    <property type="project" value="TreeGrafter"/>
</dbReference>
<dbReference type="GO" id="GO:0030145">
    <property type="term" value="F:manganese ion binding"/>
    <property type="evidence" value="ECO:0007669"/>
    <property type="project" value="UniProtKB-UniRule"/>
</dbReference>
<dbReference type="GO" id="GO:0003723">
    <property type="term" value="F:RNA binding"/>
    <property type="evidence" value="ECO:0007669"/>
    <property type="project" value="InterPro"/>
</dbReference>
<dbReference type="GO" id="GO:0004523">
    <property type="term" value="F:RNA-DNA hybrid ribonuclease activity"/>
    <property type="evidence" value="ECO:0007669"/>
    <property type="project" value="UniProtKB-UniRule"/>
</dbReference>
<dbReference type="GO" id="GO:0043137">
    <property type="term" value="P:DNA replication, removal of RNA primer"/>
    <property type="evidence" value="ECO:0007669"/>
    <property type="project" value="TreeGrafter"/>
</dbReference>
<dbReference type="GO" id="GO:0006298">
    <property type="term" value="P:mismatch repair"/>
    <property type="evidence" value="ECO:0007669"/>
    <property type="project" value="TreeGrafter"/>
</dbReference>
<dbReference type="CDD" id="cd07182">
    <property type="entry name" value="RNase_HII_bacteria_HII_like"/>
    <property type="match status" value="1"/>
</dbReference>
<dbReference type="FunFam" id="3.30.420.10:FF:000006">
    <property type="entry name" value="Ribonuclease HII"/>
    <property type="match status" value="1"/>
</dbReference>
<dbReference type="Gene3D" id="3.30.420.10">
    <property type="entry name" value="Ribonuclease H-like superfamily/Ribonuclease H"/>
    <property type="match status" value="1"/>
</dbReference>
<dbReference type="HAMAP" id="MF_00052_B">
    <property type="entry name" value="RNase_HII_B"/>
    <property type="match status" value="1"/>
</dbReference>
<dbReference type="InterPro" id="IPR022898">
    <property type="entry name" value="RNase_HII"/>
</dbReference>
<dbReference type="InterPro" id="IPR001352">
    <property type="entry name" value="RNase_HII/HIII"/>
</dbReference>
<dbReference type="InterPro" id="IPR024567">
    <property type="entry name" value="RNase_HII/HIII_dom"/>
</dbReference>
<dbReference type="InterPro" id="IPR012337">
    <property type="entry name" value="RNaseH-like_sf"/>
</dbReference>
<dbReference type="InterPro" id="IPR036397">
    <property type="entry name" value="RNaseH_sf"/>
</dbReference>
<dbReference type="NCBIfam" id="NF000594">
    <property type="entry name" value="PRK00015.1-1"/>
    <property type="match status" value="1"/>
</dbReference>
<dbReference type="NCBIfam" id="NF000595">
    <property type="entry name" value="PRK00015.1-3"/>
    <property type="match status" value="1"/>
</dbReference>
<dbReference type="NCBIfam" id="NF000596">
    <property type="entry name" value="PRK00015.1-4"/>
    <property type="match status" value="1"/>
</dbReference>
<dbReference type="PANTHER" id="PTHR10954">
    <property type="entry name" value="RIBONUCLEASE H2 SUBUNIT A"/>
    <property type="match status" value="1"/>
</dbReference>
<dbReference type="PANTHER" id="PTHR10954:SF18">
    <property type="entry name" value="RIBONUCLEASE HII"/>
    <property type="match status" value="1"/>
</dbReference>
<dbReference type="Pfam" id="PF01351">
    <property type="entry name" value="RNase_HII"/>
    <property type="match status" value="1"/>
</dbReference>
<dbReference type="SUPFAM" id="SSF53098">
    <property type="entry name" value="Ribonuclease H-like"/>
    <property type="match status" value="1"/>
</dbReference>
<dbReference type="PROSITE" id="PS51975">
    <property type="entry name" value="RNASE_H_2"/>
    <property type="match status" value="1"/>
</dbReference>
<evidence type="ECO:0000255" key="1">
    <source>
        <dbReference type="HAMAP-Rule" id="MF_00052"/>
    </source>
</evidence>
<evidence type="ECO:0000255" key="2">
    <source>
        <dbReference type="PROSITE-ProRule" id="PRU01319"/>
    </source>
</evidence>
<proteinExistence type="inferred from homology"/>